<accession>Q324Q5</accession>
<keyword id="KW-0067">ATP-binding</keyword>
<keyword id="KW-0520">NAD</keyword>
<keyword id="KW-0547">Nucleotide-binding</keyword>
<keyword id="KW-0548">Nucleotidyltransferase</keyword>
<keyword id="KW-0662">Pyridine nucleotide biosynthesis</keyword>
<keyword id="KW-0808">Transferase</keyword>
<gene>
    <name evidence="1" type="primary">nadD</name>
    <name type="ordered locus">SBO_0503</name>
</gene>
<organism>
    <name type="scientific">Shigella boydii serotype 4 (strain Sb227)</name>
    <dbReference type="NCBI Taxonomy" id="300268"/>
    <lineage>
        <taxon>Bacteria</taxon>
        <taxon>Pseudomonadati</taxon>
        <taxon>Pseudomonadota</taxon>
        <taxon>Gammaproteobacteria</taxon>
        <taxon>Enterobacterales</taxon>
        <taxon>Enterobacteriaceae</taxon>
        <taxon>Shigella</taxon>
    </lineage>
</organism>
<name>NADD_SHIBS</name>
<proteinExistence type="inferred from homology"/>
<evidence type="ECO:0000255" key="1">
    <source>
        <dbReference type="HAMAP-Rule" id="MF_00244"/>
    </source>
</evidence>
<dbReference type="EC" id="2.7.7.18" evidence="1"/>
<dbReference type="EMBL" id="CP000036">
    <property type="protein sequence ID" value="ABB65203.1"/>
    <property type="molecule type" value="Genomic_DNA"/>
</dbReference>
<dbReference type="RefSeq" id="WP_000838895.1">
    <property type="nucleotide sequence ID" value="NC_007613.1"/>
</dbReference>
<dbReference type="SMR" id="Q324Q5"/>
<dbReference type="KEGG" id="sbo:SBO_0503"/>
<dbReference type="HOGENOM" id="CLU_069765_0_0_6"/>
<dbReference type="UniPathway" id="UPA00253">
    <property type="reaction ID" value="UER00332"/>
</dbReference>
<dbReference type="Proteomes" id="UP000007067">
    <property type="component" value="Chromosome"/>
</dbReference>
<dbReference type="GO" id="GO:0005524">
    <property type="term" value="F:ATP binding"/>
    <property type="evidence" value="ECO:0007669"/>
    <property type="project" value="UniProtKB-KW"/>
</dbReference>
<dbReference type="GO" id="GO:0004515">
    <property type="term" value="F:nicotinate-nucleotide adenylyltransferase activity"/>
    <property type="evidence" value="ECO:0007669"/>
    <property type="project" value="UniProtKB-UniRule"/>
</dbReference>
<dbReference type="GO" id="GO:0009435">
    <property type="term" value="P:NAD biosynthetic process"/>
    <property type="evidence" value="ECO:0007669"/>
    <property type="project" value="UniProtKB-UniRule"/>
</dbReference>
<dbReference type="CDD" id="cd02165">
    <property type="entry name" value="NMNAT"/>
    <property type="match status" value="1"/>
</dbReference>
<dbReference type="FunFam" id="3.40.50.620:FF:000039">
    <property type="entry name" value="Probable nicotinate-nucleotide adenylyltransferase"/>
    <property type="match status" value="1"/>
</dbReference>
<dbReference type="Gene3D" id="3.40.50.620">
    <property type="entry name" value="HUPs"/>
    <property type="match status" value="1"/>
</dbReference>
<dbReference type="HAMAP" id="MF_00244">
    <property type="entry name" value="NaMN_adenylyltr"/>
    <property type="match status" value="1"/>
</dbReference>
<dbReference type="InterPro" id="IPR004821">
    <property type="entry name" value="Cyt_trans-like"/>
</dbReference>
<dbReference type="InterPro" id="IPR005248">
    <property type="entry name" value="NadD/NMNAT"/>
</dbReference>
<dbReference type="InterPro" id="IPR014729">
    <property type="entry name" value="Rossmann-like_a/b/a_fold"/>
</dbReference>
<dbReference type="NCBIfam" id="TIGR00125">
    <property type="entry name" value="cyt_tran_rel"/>
    <property type="match status" value="1"/>
</dbReference>
<dbReference type="NCBIfam" id="TIGR00482">
    <property type="entry name" value="nicotinate (nicotinamide) nucleotide adenylyltransferase"/>
    <property type="match status" value="1"/>
</dbReference>
<dbReference type="NCBIfam" id="NF000839">
    <property type="entry name" value="PRK00071.1-1"/>
    <property type="match status" value="1"/>
</dbReference>
<dbReference type="NCBIfam" id="NF000840">
    <property type="entry name" value="PRK00071.1-3"/>
    <property type="match status" value="1"/>
</dbReference>
<dbReference type="PANTHER" id="PTHR39321">
    <property type="entry name" value="NICOTINATE-NUCLEOTIDE ADENYLYLTRANSFERASE-RELATED"/>
    <property type="match status" value="1"/>
</dbReference>
<dbReference type="PANTHER" id="PTHR39321:SF3">
    <property type="entry name" value="PHOSPHOPANTETHEINE ADENYLYLTRANSFERASE"/>
    <property type="match status" value="1"/>
</dbReference>
<dbReference type="Pfam" id="PF01467">
    <property type="entry name" value="CTP_transf_like"/>
    <property type="match status" value="1"/>
</dbReference>
<dbReference type="SUPFAM" id="SSF52374">
    <property type="entry name" value="Nucleotidylyl transferase"/>
    <property type="match status" value="1"/>
</dbReference>
<feature type="chain" id="PRO_0000310145" description="Probable nicotinate-nucleotide adenylyltransferase">
    <location>
        <begin position="1"/>
        <end position="213"/>
    </location>
</feature>
<protein>
    <recommendedName>
        <fullName evidence="1">Probable nicotinate-nucleotide adenylyltransferase</fullName>
        <ecNumber evidence="1">2.7.7.18</ecNumber>
    </recommendedName>
    <alternativeName>
        <fullName evidence="1">Deamido-NAD(+) diphosphorylase</fullName>
    </alternativeName>
    <alternativeName>
        <fullName evidence="1">Deamido-NAD(+) pyrophosphorylase</fullName>
    </alternativeName>
    <alternativeName>
        <fullName evidence="1">Nicotinate mononucleotide adenylyltransferase</fullName>
        <shortName evidence="1">NaMN adenylyltransferase</shortName>
    </alternativeName>
</protein>
<sequence>MKSLQALFGGTFDPVHYGHLKPVETLANLIGLTRVTIIPNNVPPHRPQPEANSVQRKHMLELAIANKPLFTLDERELKRNAPSYTAQTLKEWRQEQGPDVPLAFIIGQDSLLTFPTWYEYETILDNAHLIVCRRPGYPLEMAQPQYQQWLEDHLTHNQEDLHLQPAGKIYLAETPWFNISATIIRERLQNGESCEDLLPEPVLTYINQQGLYR</sequence>
<comment type="function">
    <text evidence="1">Catalyzes the reversible adenylation of nicotinate mononucleotide (NaMN) to nicotinic acid adenine dinucleotide (NaAD).</text>
</comment>
<comment type="catalytic activity">
    <reaction evidence="1">
        <text>nicotinate beta-D-ribonucleotide + ATP + H(+) = deamido-NAD(+) + diphosphate</text>
        <dbReference type="Rhea" id="RHEA:22860"/>
        <dbReference type="ChEBI" id="CHEBI:15378"/>
        <dbReference type="ChEBI" id="CHEBI:30616"/>
        <dbReference type="ChEBI" id="CHEBI:33019"/>
        <dbReference type="ChEBI" id="CHEBI:57502"/>
        <dbReference type="ChEBI" id="CHEBI:58437"/>
        <dbReference type="EC" id="2.7.7.18"/>
    </reaction>
</comment>
<comment type="pathway">
    <text evidence="1">Cofactor biosynthesis; NAD(+) biosynthesis; deamido-NAD(+) from nicotinate D-ribonucleotide: step 1/1.</text>
</comment>
<comment type="similarity">
    <text evidence="1">Belongs to the NadD family.</text>
</comment>
<reference key="1">
    <citation type="journal article" date="2005" name="Nucleic Acids Res.">
        <title>Genome dynamics and diversity of Shigella species, the etiologic agents of bacillary dysentery.</title>
        <authorList>
            <person name="Yang F."/>
            <person name="Yang J."/>
            <person name="Zhang X."/>
            <person name="Chen L."/>
            <person name="Jiang Y."/>
            <person name="Yan Y."/>
            <person name="Tang X."/>
            <person name="Wang J."/>
            <person name="Xiong Z."/>
            <person name="Dong J."/>
            <person name="Xue Y."/>
            <person name="Zhu Y."/>
            <person name="Xu X."/>
            <person name="Sun L."/>
            <person name="Chen S."/>
            <person name="Nie H."/>
            <person name="Peng J."/>
            <person name="Xu J."/>
            <person name="Wang Y."/>
            <person name="Yuan Z."/>
            <person name="Wen Y."/>
            <person name="Yao Z."/>
            <person name="Shen Y."/>
            <person name="Qiang B."/>
            <person name="Hou Y."/>
            <person name="Yu J."/>
            <person name="Jin Q."/>
        </authorList>
    </citation>
    <scope>NUCLEOTIDE SEQUENCE [LARGE SCALE GENOMIC DNA]</scope>
    <source>
        <strain>Sb227</strain>
    </source>
</reference>